<gene>
    <name evidence="2" type="primary">tuf1</name>
    <name type="ordered locus">Mfla_0265</name>
</gene>
<evidence type="ECO:0000250" key="1"/>
<evidence type="ECO:0000255" key="2">
    <source>
        <dbReference type="HAMAP-Rule" id="MF_00118"/>
    </source>
</evidence>
<name>EFTU1_METFK</name>
<dbReference type="EC" id="3.6.5.3" evidence="2"/>
<dbReference type="EMBL" id="CP000284">
    <property type="protein sequence ID" value="ABE48536.1"/>
    <property type="molecule type" value="Genomic_DNA"/>
</dbReference>
<dbReference type="RefSeq" id="WP_011478633.1">
    <property type="nucleotide sequence ID" value="NC_007947.1"/>
</dbReference>
<dbReference type="SMR" id="Q1H4Q1"/>
<dbReference type="STRING" id="265072.Mfla_0265"/>
<dbReference type="KEGG" id="mfa:Mfla_0265"/>
<dbReference type="eggNOG" id="COG0050">
    <property type="taxonomic scope" value="Bacteria"/>
</dbReference>
<dbReference type="HOGENOM" id="CLU_007265_0_0_4"/>
<dbReference type="OrthoDB" id="9803139at2"/>
<dbReference type="Proteomes" id="UP000002440">
    <property type="component" value="Chromosome"/>
</dbReference>
<dbReference type="GO" id="GO:0005829">
    <property type="term" value="C:cytosol"/>
    <property type="evidence" value="ECO:0007669"/>
    <property type="project" value="TreeGrafter"/>
</dbReference>
<dbReference type="GO" id="GO:0005525">
    <property type="term" value="F:GTP binding"/>
    <property type="evidence" value="ECO:0007669"/>
    <property type="project" value="UniProtKB-UniRule"/>
</dbReference>
<dbReference type="GO" id="GO:0003924">
    <property type="term" value="F:GTPase activity"/>
    <property type="evidence" value="ECO:0007669"/>
    <property type="project" value="InterPro"/>
</dbReference>
<dbReference type="GO" id="GO:0097216">
    <property type="term" value="F:guanosine tetraphosphate binding"/>
    <property type="evidence" value="ECO:0007669"/>
    <property type="project" value="UniProtKB-ARBA"/>
</dbReference>
<dbReference type="GO" id="GO:0003746">
    <property type="term" value="F:translation elongation factor activity"/>
    <property type="evidence" value="ECO:0007669"/>
    <property type="project" value="UniProtKB-UniRule"/>
</dbReference>
<dbReference type="CDD" id="cd01884">
    <property type="entry name" value="EF_Tu"/>
    <property type="match status" value="1"/>
</dbReference>
<dbReference type="CDD" id="cd03697">
    <property type="entry name" value="EFTU_II"/>
    <property type="match status" value="1"/>
</dbReference>
<dbReference type="CDD" id="cd03707">
    <property type="entry name" value="EFTU_III"/>
    <property type="match status" value="1"/>
</dbReference>
<dbReference type="FunFam" id="2.40.30.10:FF:000001">
    <property type="entry name" value="Elongation factor Tu"/>
    <property type="match status" value="1"/>
</dbReference>
<dbReference type="FunFam" id="3.40.50.300:FF:000003">
    <property type="entry name" value="Elongation factor Tu"/>
    <property type="match status" value="1"/>
</dbReference>
<dbReference type="Gene3D" id="3.40.50.300">
    <property type="entry name" value="P-loop containing nucleotide triphosphate hydrolases"/>
    <property type="match status" value="1"/>
</dbReference>
<dbReference type="Gene3D" id="2.40.30.10">
    <property type="entry name" value="Translation factors"/>
    <property type="match status" value="2"/>
</dbReference>
<dbReference type="HAMAP" id="MF_00118_B">
    <property type="entry name" value="EF_Tu_B"/>
    <property type="match status" value="1"/>
</dbReference>
<dbReference type="InterPro" id="IPR041709">
    <property type="entry name" value="EF-Tu_GTP-bd"/>
</dbReference>
<dbReference type="InterPro" id="IPR050055">
    <property type="entry name" value="EF-Tu_GTPase"/>
</dbReference>
<dbReference type="InterPro" id="IPR004161">
    <property type="entry name" value="EFTu-like_2"/>
</dbReference>
<dbReference type="InterPro" id="IPR033720">
    <property type="entry name" value="EFTU_2"/>
</dbReference>
<dbReference type="InterPro" id="IPR031157">
    <property type="entry name" value="G_TR_CS"/>
</dbReference>
<dbReference type="InterPro" id="IPR027417">
    <property type="entry name" value="P-loop_NTPase"/>
</dbReference>
<dbReference type="InterPro" id="IPR005225">
    <property type="entry name" value="Small_GTP-bd"/>
</dbReference>
<dbReference type="InterPro" id="IPR000795">
    <property type="entry name" value="T_Tr_GTP-bd_dom"/>
</dbReference>
<dbReference type="InterPro" id="IPR009000">
    <property type="entry name" value="Transl_B-barrel_sf"/>
</dbReference>
<dbReference type="InterPro" id="IPR009001">
    <property type="entry name" value="Transl_elong_EF1A/Init_IF2_C"/>
</dbReference>
<dbReference type="InterPro" id="IPR004541">
    <property type="entry name" value="Transl_elong_EFTu/EF1A_bac/org"/>
</dbReference>
<dbReference type="InterPro" id="IPR004160">
    <property type="entry name" value="Transl_elong_EFTu/EF1A_C"/>
</dbReference>
<dbReference type="NCBIfam" id="TIGR00485">
    <property type="entry name" value="EF-Tu"/>
    <property type="match status" value="1"/>
</dbReference>
<dbReference type="NCBIfam" id="NF000766">
    <property type="entry name" value="PRK00049.1"/>
    <property type="match status" value="1"/>
</dbReference>
<dbReference type="NCBIfam" id="NF009372">
    <property type="entry name" value="PRK12735.1"/>
    <property type="match status" value="1"/>
</dbReference>
<dbReference type="NCBIfam" id="NF009373">
    <property type="entry name" value="PRK12736.1"/>
    <property type="match status" value="1"/>
</dbReference>
<dbReference type="NCBIfam" id="TIGR00231">
    <property type="entry name" value="small_GTP"/>
    <property type="match status" value="1"/>
</dbReference>
<dbReference type="PANTHER" id="PTHR43721:SF22">
    <property type="entry name" value="ELONGATION FACTOR TU, MITOCHONDRIAL"/>
    <property type="match status" value="1"/>
</dbReference>
<dbReference type="PANTHER" id="PTHR43721">
    <property type="entry name" value="ELONGATION FACTOR TU-RELATED"/>
    <property type="match status" value="1"/>
</dbReference>
<dbReference type="Pfam" id="PF00009">
    <property type="entry name" value="GTP_EFTU"/>
    <property type="match status" value="1"/>
</dbReference>
<dbReference type="Pfam" id="PF03144">
    <property type="entry name" value="GTP_EFTU_D2"/>
    <property type="match status" value="1"/>
</dbReference>
<dbReference type="Pfam" id="PF03143">
    <property type="entry name" value="GTP_EFTU_D3"/>
    <property type="match status" value="1"/>
</dbReference>
<dbReference type="PRINTS" id="PR00315">
    <property type="entry name" value="ELONGATNFCT"/>
</dbReference>
<dbReference type="SUPFAM" id="SSF50465">
    <property type="entry name" value="EF-Tu/eEF-1alpha/eIF2-gamma C-terminal domain"/>
    <property type="match status" value="1"/>
</dbReference>
<dbReference type="SUPFAM" id="SSF52540">
    <property type="entry name" value="P-loop containing nucleoside triphosphate hydrolases"/>
    <property type="match status" value="1"/>
</dbReference>
<dbReference type="SUPFAM" id="SSF50447">
    <property type="entry name" value="Translation proteins"/>
    <property type="match status" value="1"/>
</dbReference>
<dbReference type="PROSITE" id="PS00301">
    <property type="entry name" value="G_TR_1"/>
    <property type="match status" value="1"/>
</dbReference>
<dbReference type="PROSITE" id="PS51722">
    <property type="entry name" value="G_TR_2"/>
    <property type="match status" value="1"/>
</dbReference>
<reference key="1">
    <citation type="submission" date="2006-03" db="EMBL/GenBank/DDBJ databases">
        <title>Complete sequence of Methylobacillus flagellatus KT.</title>
        <authorList>
            <consortium name="US DOE Joint Genome Institute"/>
            <person name="Copeland A."/>
            <person name="Lucas S."/>
            <person name="Lapidus A."/>
            <person name="Barry K."/>
            <person name="Detter J.C."/>
            <person name="Glavina del Rio T."/>
            <person name="Hammon N."/>
            <person name="Israni S."/>
            <person name="Dalin E."/>
            <person name="Tice H."/>
            <person name="Pitluck S."/>
            <person name="Brettin T."/>
            <person name="Bruce D."/>
            <person name="Han C."/>
            <person name="Tapia R."/>
            <person name="Saunders E."/>
            <person name="Gilna P."/>
            <person name="Schmutz J."/>
            <person name="Larimer F."/>
            <person name="Land M."/>
            <person name="Kyrpides N."/>
            <person name="Anderson I."/>
            <person name="Richardson P."/>
        </authorList>
    </citation>
    <scope>NUCLEOTIDE SEQUENCE [LARGE SCALE GENOMIC DNA]</scope>
    <source>
        <strain>ATCC 51484 / DSM 6875 / VKM B-1610 / KT</strain>
    </source>
</reference>
<accession>Q1H4Q1</accession>
<comment type="function">
    <text evidence="2">GTP hydrolase that promotes the GTP-dependent binding of aminoacyl-tRNA to the A-site of ribosomes during protein biosynthesis.</text>
</comment>
<comment type="catalytic activity">
    <reaction evidence="2">
        <text>GTP + H2O = GDP + phosphate + H(+)</text>
        <dbReference type="Rhea" id="RHEA:19669"/>
        <dbReference type="ChEBI" id="CHEBI:15377"/>
        <dbReference type="ChEBI" id="CHEBI:15378"/>
        <dbReference type="ChEBI" id="CHEBI:37565"/>
        <dbReference type="ChEBI" id="CHEBI:43474"/>
        <dbReference type="ChEBI" id="CHEBI:58189"/>
        <dbReference type="EC" id="3.6.5.3"/>
    </reaction>
    <physiologicalReaction direction="left-to-right" evidence="2">
        <dbReference type="Rhea" id="RHEA:19670"/>
    </physiologicalReaction>
</comment>
<comment type="subunit">
    <text evidence="2">Monomer.</text>
</comment>
<comment type="subcellular location">
    <subcellularLocation>
        <location evidence="2">Cytoplasm</location>
    </subcellularLocation>
</comment>
<comment type="similarity">
    <text evidence="2">Belongs to the TRAFAC class translation factor GTPase superfamily. Classic translation factor GTPase family. EF-Tu/EF-1A subfamily.</text>
</comment>
<keyword id="KW-0963">Cytoplasm</keyword>
<keyword id="KW-0251">Elongation factor</keyword>
<keyword id="KW-0342">GTP-binding</keyword>
<keyword id="KW-0378">Hydrolase</keyword>
<keyword id="KW-0460">Magnesium</keyword>
<keyword id="KW-0479">Metal-binding</keyword>
<keyword id="KW-0547">Nucleotide-binding</keyword>
<keyword id="KW-0648">Protein biosynthesis</keyword>
<keyword id="KW-1185">Reference proteome</keyword>
<proteinExistence type="inferred from homology"/>
<feature type="chain" id="PRO_0000337432" description="Elongation factor Tu 1">
    <location>
        <begin position="1"/>
        <end position="396"/>
    </location>
</feature>
<feature type="domain" description="tr-type G">
    <location>
        <begin position="10"/>
        <end position="206"/>
    </location>
</feature>
<feature type="region of interest" description="G1" evidence="1">
    <location>
        <begin position="19"/>
        <end position="26"/>
    </location>
</feature>
<feature type="region of interest" description="G2" evidence="1">
    <location>
        <begin position="60"/>
        <end position="64"/>
    </location>
</feature>
<feature type="region of interest" description="G3" evidence="1">
    <location>
        <begin position="81"/>
        <end position="84"/>
    </location>
</feature>
<feature type="region of interest" description="G4" evidence="1">
    <location>
        <begin position="136"/>
        <end position="139"/>
    </location>
</feature>
<feature type="region of interest" description="G5" evidence="1">
    <location>
        <begin position="174"/>
        <end position="176"/>
    </location>
</feature>
<feature type="binding site" evidence="2">
    <location>
        <begin position="19"/>
        <end position="26"/>
    </location>
    <ligand>
        <name>GTP</name>
        <dbReference type="ChEBI" id="CHEBI:37565"/>
    </ligand>
</feature>
<feature type="binding site" evidence="2">
    <location>
        <position position="26"/>
    </location>
    <ligand>
        <name>Mg(2+)</name>
        <dbReference type="ChEBI" id="CHEBI:18420"/>
    </ligand>
</feature>
<feature type="binding site" evidence="2">
    <location>
        <begin position="81"/>
        <end position="85"/>
    </location>
    <ligand>
        <name>GTP</name>
        <dbReference type="ChEBI" id="CHEBI:37565"/>
    </ligand>
</feature>
<feature type="binding site" evidence="2">
    <location>
        <begin position="136"/>
        <end position="139"/>
    </location>
    <ligand>
        <name>GTP</name>
        <dbReference type="ChEBI" id="CHEBI:37565"/>
    </ligand>
</feature>
<protein>
    <recommendedName>
        <fullName evidence="2">Elongation factor Tu 1</fullName>
        <shortName evidence="2">EF-Tu 1</shortName>
        <ecNumber evidence="2">3.6.5.3</ecNumber>
    </recommendedName>
</protein>
<organism>
    <name type="scientific">Methylobacillus flagellatus (strain ATCC 51484 / DSM 6875 / VKM B-1610 / KT)</name>
    <dbReference type="NCBI Taxonomy" id="265072"/>
    <lineage>
        <taxon>Bacteria</taxon>
        <taxon>Pseudomonadati</taxon>
        <taxon>Pseudomonadota</taxon>
        <taxon>Betaproteobacteria</taxon>
        <taxon>Nitrosomonadales</taxon>
        <taxon>Methylophilaceae</taxon>
        <taxon>Methylobacillus</taxon>
    </lineage>
</organism>
<sequence length="396" mass="42922">MAKGKFERTKPHVNVGTIGHVDHGKTTLTAAITTVLTKKFGGEAKDYSQIDNAPEEKARGITINTSHVEYETETRHYAHVDCPGHADYVKNMITGAAQMDGAILVVSAADGPMPQTREHILLARQVGVPYIIVFLNKADMVDDAELLELVEMEVRELLSKYDFPGDDTPIIKGSAKLALEGDQSDIGEPAIFRLAEALDTYIPTPERAVDGTFLMPVEDVFSISGRGTVVTGRVERGIVKVGDEIEIVGLKPTIKTTCTGVEMFRKLLDQGQAGDNVGVLLRGTKREEVERGQVLAKVGSIKPHTKFTAEIYVLGKDEGGRHTPFFNGYRPQFYFRTTDVTGAVELPAGTEMVMPGDNVSISVSLIAPIAMEEGLRFAIREGGRTVGAGVVAKIIE</sequence>